<gene>
    <name evidence="1" type="primary">mnmA</name>
    <name type="synonym">trmU</name>
    <name type="ordered locus">SAK_2102</name>
</gene>
<evidence type="ECO:0000255" key="1">
    <source>
        <dbReference type="HAMAP-Rule" id="MF_00144"/>
    </source>
</evidence>
<keyword id="KW-0067">ATP-binding</keyword>
<keyword id="KW-0963">Cytoplasm</keyword>
<keyword id="KW-1015">Disulfide bond</keyword>
<keyword id="KW-0547">Nucleotide-binding</keyword>
<keyword id="KW-0694">RNA-binding</keyword>
<keyword id="KW-0808">Transferase</keyword>
<keyword id="KW-0819">tRNA processing</keyword>
<keyword id="KW-0820">tRNA-binding</keyword>
<comment type="function">
    <text evidence="1">Catalyzes the 2-thiolation of uridine at the wobble position (U34) of tRNA, leading to the formation of s(2)U34.</text>
</comment>
<comment type="catalytic activity">
    <reaction evidence="1">
        <text>S-sulfanyl-L-cysteinyl-[protein] + uridine(34) in tRNA + AH2 + ATP = 2-thiouridine(34) in tRNA + L-cysteinyl-[protein] + A + AMP + diphosphate + H(+)</text>
        <dbReference type="Rhea" id="RHEA:47032"/>
        <dbReference type="Rhea" id="RHEA-COMP:10131"/>
        <dbReference type="Rhea" id="RHEA-COMP:11726"/>
        <dbReference type="Rhea" id="RHEA-COMP:11727"/>
        <dbReference type="Rhea" id="RHEA-COMP:11728"/>
        <dbReference type="ChEBI" id="CHEBI:13193"/>
        <dbReference type="ChEBI" id="CHEBI:15378"/>
        <dbReference type="ChEBI" id="CHEBI:17499"/>
        <dbReference type="ChEBI" id="CHEBI:29950"/>
        <dbReference type="ChEBI" id="CHEBI:30616"/>
        <dbReference type="ChEBI" id="CHEBI:33019"/>
        <dbReference type="ChEBI" id="CHEBI:61963"/>
        <dbReference type="ChEBI" id="CHEBI:65315"/>
        <dbReference type="ChEBI" id="CHEBI:87170"/>
        <dbReference type="ChEBI" id="CHEBI:456215"/>
        <dbReference type="EC" id="2.8.1.13"/>
    </reaction>
</comment>
<comment type="subcellular location">
    <subcellularLocation>
        <location evidence="1">Cytoplasm</location>
    </subcellularLocation>
</comment>
<comment type="similarity">
    <text evidence="1">Belongs to the MnmA/TRMU family.</text>
</comment>
<proteinExistence type="inferred from homology"/>
<dbReference type="EC" id="2.8.1.13" evidence="1"/>
<dbReference type="EMBL" id="CP000114">
    <property type="protein sequence ID" value="ABA46129.1"/>
    <property type="molecule type" value="Genomic_DNA"/>
</dbReference>
<dbReference type="RefSeq" id="WP_000131745.1">
    <property type="nucleotide sequence ID" value="NC_007432.1"/>
</dbReference>
<dbReference type="SMR" id="Q3JYG1"/>
<dbReference type="KEGG" id="sak:SAK_2102"/>
<dbReference type="HOGENOM" id="CLU_035188_1_0_9"/>
<dbReference type="GO" id="GO:0005737">
    <property type="term" value="C:cytoplasm"/>
    <property type="evidence" value="ECO:0007669"/>
    <property type="project" value="UniProtKB-SubCell"/>
</dbReference>
<dbReference type="GO" id="GO:0005524">
    <property type="term" value="F:ATP binding"/>
    <property type="evidence" value="ECO:0007669"/>
    <property type="project" value="UniProtKB-KW"/>
</dbReference>
<dbReference type="GO" id="GO:0000049">
    <property type="term" value="F:tRNA binding"/>
    <property type="evidence" value="ECO:0007669"/>
    <property type="project" value="UniProtKB-KW"/>
</dbReference>
<dbReference type="GO" id="GO:0103016">
    <property type="term" value="F:tRNA-uridine 2-sulfurtransferase activity"/>
    <property type="evidence" value="ECO:0007669"/>
    <property type="project" value="UniProtKB-EC"/>
</dbReference>
<dbReference type="GO" id="GO:0002143">
    <property type="term" value="P:tRNA wobble position uridine thiolation"/>
    <property type="evidence" value="ECO:0007669"/>
    <property type="project" value="TreeGrafter"/>
</dbReference>
<dbReference type="CDD" id="cd01998">
    <property type="entry name" value="MnmA_TRMU-like"/>
    <property type="match status" value="1"/>
</dbReference>
<dbReference type="FunFam" id="2.30.30.280:FF:000001">
    <property type="entry name" value="tRNA-specific 2-thiouridylase MnmA"/>
    <property type="match status" value="1"/>
</dbReference>
<dbReference type="FunFam" id="2.40.30.10:FF:000023">
    <property type="entry name" value="tRNA-specific 2-thiouridylase MnmA"/>
    <property type="match status" value="1"/>
</dbReference>
<dbReference type="FunFam" id="3.40.50.620:FF:000004">
    <property type="entry name" value="tRNA-specific 2-thiouridylase MnmA"/>
    <property type="match status" value="1"/>
</dbReference>
<dbReference type="Gene3D" id="2.30.30.280">
    <property type="entry name" value="Adenine nucleotide alpha hydrolases-like domains"/>
    <property type="match status" value="1"/>
</dbReference>
<dbReference type="Gene3D" id="3.40.50.620">
    <property type="entry name" value="HUPs"/>
    <property type="match status" value="1"/>
</dbReference>
<dbReference type="Gene3D" id="2.40.30.10">
    <property type="entry name" value="Translation factors"/>
    <property type="match status" value="1"/>
</dbReference>
<dbReference type="HAMAP" id="MF_00144">
    <property type="entry name" value="tRNA_thiouridyl_MnmA"/>
    <property type="match status" value="1"/>
</dbReference>
<dbReference type="InterPro" id="IPR004506">
    <property type="entry name" value="MnmA-like"/>
</dbReference>
<dbReference type="InterPro" id="IPR046885">
    <property type="entry name" value="MnmA-like_C"/>
</dbReference>
<dbReference type="InterPro" id="IPR046884">
    <property type="entry name" value="MnmA-like_central"/>
</dbReference>
<dbReference type="InterPro" id="IPR023382">
    <property type="entry name" value="MnmA-like_central_sf"/>
</dbReference>
<dbReference type="InterPro" id="IPR014729">
    <property type="entry name" value="Rossmann-like_a/b/a_fold"/>
</dbReference>
<dbReference type="NCBIfam" id="NF001138">
    <property type="entry name" value="PRK00143.1"/>
    <property type="match status" value="1"/>
</dbReference>
<dbReference type="NCBIfam" id="TIGR00420">
    <property type="entry name" value="trmU"/>
    <property type="match status" value="1"/>
</dbReference>
<dbReference type="PANTHER" id="PTHR11933:SF5">
    <property type="entry name" value="MITOCHONDRIAL TRNA-SPECIFIC 2-THIOURIDYLASE 1"/>
    <property type="match status" value="1"/>
</dbReference>
<dbReference type="PANTHER" id="PTHR11933">
    <property type="entry name" value="TRNA 5-METHYLAMINOMETHYL-2-THIOURIDYLATE -METHYLTRANSFERASE"/>
    <property type="match status" value="1"/>
</dbReference>
<dbReference type="Pfam" id="PF03054">
    <property type="entry name" value="tRNA_Me_trans"/>
    <property type="match status" value="1"/>
</dbReference>
<dbReference type="Pfam" id="PF20258">
    <property type="entry name" value="tRNA_Me_trans_C"/>
    <property type="match status" value="1"/>
</dbReference>
<dbReference type="Pfam" id="PF20259">
    <property type="entry name" value="tRNA_Me_trans_M"/>
    <property type="match status" value="1"/>
</dbReference>
<dbReference type="SUPFAM" id="SSF52402">
    <property type="entry name" value="Adenine nucleotide alpha hydrolases-like"/>
    <property type="match status" value="1"/>
</dbReference>
<organism>
    <name type="scientific">Streptococcus agalactiae serotype Ia (strain ATCC 27591 / A909 / CDC SS700)</name>
    <dbReference type="NCBI Taxonomy" id="205921"/>
    <lineage>
        <taxon>Bacteria</taxon>
        <taxon>Bacillati</taxon>
        <taxon>Bacillota</taxon>
        <taxon>Bacilli</taxon>
        <taxon>Lactobacillales</taxon>
        <taxon>Streptococcaceae</taxon>
        <taxon>Streptococcus</taxon>
    </lineage>
</organism>
<protein>
    <recommendedName>
        <fullName evidence="1">tRNA-specific 2-thiouridylase MnmA</fullName>
        <ecNumber evidence="1">2.8.1.13</ecNumber>
    </recommendedName>
</protein>
<feature type="chain" id="PRO_1000009584" description="tRNA-specific 2-thiouridylase MnmA">
    <location>
        <begin position="1"/>
        <end position="373"/>
    </location>
</feature>
<feature type="region of interest" description="Interaction with target base in tRNA" evidence="1">
    <location>
        <begin position="98"/>
        <end position="100"/>
    </location>
</feature>
<feature type="region of interest" description="Interaction with tRNA" evidence="1">
    <location>
        <begin position="150"/>
        <end position="152"/>
    </location>
</feature>
<feature type="region of interest" description="Interaction with tRNA" evidence="1">
    <location>
        <begin position="312"/>
        <end position="313"/>
    </location>
</feature>
<feature type="active site" description="Nucleophile" evidence="1">
    <location>
        <position position="103"/>
    </location>
</feature>
<feature type="active site" description="Cysteine persulfide intermediate" evidence="1">
    <location>
        <position position="200"/>
    </location>
</feature>
<feature type="binding site" evidence="1">
    <location>
        <begin position="12"/>
        <end position="19"/>
    </location>
    <ligand>
        <name>ATP</name>
        <dbReference type="ChEBI" id="CHEBI:30616"/>
    </ligand>
</feature>
<feature type="binding site" evidence="1">
    <location>
        <position position="38"/>
    </location>
    <ligand>
        <name>ATP</name>
        <dbReference type="ChEBI" id="CHEBI:30616"/>
    </ligand>
</feature>
<feature type="binding site" evidence="1">
    <location>
        <position position="127"/>
    </location>
    <ligand>
        <name>ATP</name>
        <dbReference type="ChEBI" id="CHEBI:30616"/>
    </ligand>
</feature>
<feature type="site" description="Interaction with tRNA" evidence="1">
    <location>
        <position position="128"/>
    </location>
</feature>
<feature type="site" description="Interaction with tRNA" evidence="1">
    <location>
        <position position="344"/>
    </location>
</feature>
<feature type="disulfide bond" description="Alternate" evidence="1">
    <location>
        <begin position="103"/>
        <end position="200"/>
    </location>
</feature>
<name>MNMA_STRA1</name>
<accession>Q3JYG1</accession>
<reference key="1">
    <citation type="journal article" date="2005" name="Proc. Natl. Acad. Sci. U.S.A.">
        <title>Genome analysis of multiple pathogenic isolates of Streptococcus agalactiae: implications for the microbial 'pan-genome'.</title>
        <authorList>
            <person name="Tettelin H."/>
            <person name="Masignani V."/>
            <person name="Cieslewicz M.J."/>
            <person name="Donati C."/>
            <person name="Medini D."/>
            <person name="Ward N.L."/>
            <person name="Angiuoli S.V."/>
            <person name="Crabtree J."/>
            <person name="Jones A.L."/>
            <person name="Durkin A.S."/>
            <person name="DeBoy R.T."/>
            <person name="Davidsen T.M."/>
            <person name="Mora M."/>
            <person name="Scarselli M."/>
            <person name="Margarit y Ros I."/>
            <person name="Peterson J.D."/>
            <person name="Hauser C.R."/>
            <person name="Sundaram J.P."/>
            <person name="Nelson W.C."/>
            <person name="Madupu R."/>
            <person name="Brinkac L.M."/>
            <person name="Dodson R.J."/>
            <person name="Rosovitz M.J."/>
            <person name="Sullivan S.A."/>
            <person name="Daugherty S.C."/>
            <person name="Haft D.H."/>
            <person name="Selengut J."/>
            <person name="Gwinn M.L."/>
            <person name="Zhou L."/>
            <person name="Zafar N."/>
            <person name="Khouri H."/>
            <person name="Radune D."/>
            <person name="Dimitrov G."/>
            <person name="Watkins K."/>
            <person name="O'Connor K.J."/>
            <person name="Smith S."/>
            <person name="Utterback T.R."/>
            <person name="White O."/>
            <person name="Rubens C.E."/>
            <person name="Grandi G."/>
            <person name="Madoff L.C."/>
            <person name="Kasper D.L."/>
            <person name="Telford J.L."/>
            <person name="Wessels M.R."/>
            <person name="Rappuoli R."/>
            <person name="Fraser C.M."/>
        </authorList>
    </citation>
    <scope>NUCLEOTIDE SEQUENCE [LARGE SCALE GENOMIC DNA]</scope>
    <source>
        <strain>ATCC 27591 / A909 / CDC SS700</strain>
    </source>
</reference>
<sequence length="373" mass="41978">MTDNSNIRVVVGMSGGVDSSVTALLLKEQGYDVIGVFMKNWDDTDEFGVCTATEDYKDVAAVADQIGIPYYSVNFEKEYWDRVFEYFLAEYRAGRTPNPDVMCNKEIKFKAFLDYAMTLGADYVATGHYAQVTRDENGIVHMLRGADNNKDQTYFLSQLSQEQLQKTLFPLGHLQKPEVRRIAEEAGLATAKKKDSTGICFIGEKNFKDFLGQYLPAQPGRMMTVDGRDMGEHAGLMYYTIGQRGGLGIGGQHGGDNKPWFVVGKDLSKNILYVGQGFYHDSLMSTSLTASEIHFTRDMPNEFKLECTAKFRYRQPDSKVKVYVKGNQARVVFDDLQRAITPGQAVVFYNEQECLGGGMIDQAYRDDKICQYI</sequence>